<feature type="chain" id="PRO_0000096465" description="Bifunctional oligoribonuclease and PAP phosphatase NrnA">
    <location>
        <begin position="1"/>
        <end position="318"/>
    </location>
</feature>
<name>NRNA_MYCGE</name>
<evidence type="ECO:0000250" key="1"/>
<evidence type="ECO:0000269" key="2">
    <source>
    </source>
</evidence>
<evidence type="ECO:0000305" key="3"/>
<organism>
    <name type="scientific">Mycoplasma genitalium (strain ATCC 33530 / DSM 19775 / NCTC 10195 / G37)</name>
    <name type="common">Mycoplasmoides genitalium</name>
    <dbReference type="NCBI Taxonomy" id="243273"/>
    <lineage>
        <taxon>Bacteria</taxon>
        <taxon>Bacillati</taxon>
        <taxon>Mycoplasmatota</taxon>
        <taxon>Mycoplasmoidales</taxon>
        <taxon>Mycoplasmoidaceae</taxon>
        <taxon>Mycoplasmoides</taxon>
    </lineage>
</organism>
<protein>
    <recommendedName>
        <fullName>Bifunctional oligoribonuclease and PAP phosphatase NrnA</fullName>
        <ecNumber>3.1.-.-</ecNumber>
    </recommendedName>
    <alternativeName>
        <fullName>3'(2'),5'-bisphosphate nucleotidase</fullName>
        <ecNumber>3.1.3.7</ecNumber>
    </alternativeName>
    <alternativeName>
        <fullName>3'-phosphoadenosine 5'-phosphate phosphatase</fullName>
        <shortName>PAP phosphatase</shortName>
    </alternativeName>
    <alternativeName>
        <fullName>Mgp-operon protein 1</fullName>
        <shortName>Mgp1</shortName>
    </alternativeName>
    <alternativeName>
        <fullName>ORF-1 protein</fullName>
    </alternativeName>
    <alternativeName>
        <fullName>nanoRNase</fullName>
    </alternativeName>
</protein>
<keyword id="KW-0269">Exonuclease</keyword>
<keyword id="KW-0378">Hydrolase</keyword>
<keyword id="KW-0540">Nuclease</keyword>
<keyword id="KW-1185">Reference proteome</keyword>
<accession>P22746</accession>
<dbReference type="EC" id="3.1.-.-"/>
<dbReference type="EC" id="3.1.3.7"/>
<dbReference type="EMBL" id="L43967">
    <property type="protein sequence ID" value="AAC71409.2"/>
    <property type="molecule type" value="Genomic_DNA"/>
</dbReference>
<dbReference type="EMBL" id="M31431">
    <property type="protein sequence ID" value="AAA25419.1"/>
    <property type="molecule type" value="Genomic_DNA"/>
</dbReference>
<dbReference type="PIR" id="A64221">
    <property type="entry name" value="A64221"/>
</dbReference>
<dbReference type="RefSeq" id="WP_009886005.1">
    <property type="nucleotide sequence ID" value="NC_000908.2"/>
</dbReference>
<dbReference type="SMR" id="P22746"/>
<dbReference type="STRING" id="243273.MG_190"/>
<dbReference type="GeneID" id="88282322"/>
<dbReference type="KEGG" id="mge:MG_190"/>
<dbReference type="eggNOG" id="COG0618">
    <property type="taxonomic scope" value="Bacteria"/>
</dbReference>
<dbReference type="HOGENOM" id="CLU_039720_1_0_14"/>
<dbReference type="InParanoid" id="P22746"/>
<dbReference type="OrthoDB" id="9803668at2"/>
<dbReference type="BioCyc" id="MGEN243273:G1GJ2-218-MONOMER"/>
<dbReference type="Proteomes" id="UP000000807">
    <property type="component" value="Chromosome"/>
</dbReference>
<dbReference type="GO" id="GO:0008441">
    <property type="term" value="F:3'(2'),5'-bisphosphate nucleotidase activity"/>
    <property type="evidence" value="ECO:0007669"/>
    <property type="project" value="UniProtKB-EC"/>
</dbReference>
<dbReference type="GO" id="GO:0004527">
    <property type="term" value="F:exonuclease activity"/>
    <property type="evidence" value="ECO:0007669"/>
    <property type="project" value="UniProtKB-KW"/>
</dbReference>
<dbReference type="GO" id="GO:0003676">
    <property type="term" value="F:nucleic acid binding"/>
    <property type="evidence" value="ECO:0007669"/>
    <property type="project" value="InterPro"/>
</dbReference>
<dbReference type="Gene3D" id="3.10.310.30">
    <property type="match status" value="1"/>
</dbReference>
<dbReference type="Gene3D" id="3.90.1640.10">
    <property type="entry name" value="inorganic pyrophosphatase (n-terminal core)"/>
    <property type="match status" value="1"/>
</dbReference>
<dbReference type="InterPro" id="IPR001667">
    <property type="entry name" value="DDH_dom"/>
</dbReference>
<dbReference type="InterPro" id="IPR038763">
    <property type="entry name" value="DHH_sf"/>
</dbReference>
<dbReference type="InterPro" id="IPR003156">
    <property type="entry name" value="DHHA1_dom"/>
</dbReference>
<dbReference type="InterPro" id="IPR051319">
    <property type="entry name" value="Oligoribo/pAp-PDE_c-di-AMP_PDE"/>
</dbReference>
<dbReference type="PANTHER" id="PTHR47618">
    <property type="entry name" value="BIFUNCTIONAL OLIGORIBONUCLEASE AND PAP PHOSPHATASE NRNA"/>
    <property type="match status" value="1"/>
</dbReference>
<dbReference type="PANTHER" id="PTHR47618:SF1">
    <property type="entry name" value="BIFUNCTIONAL OLIGORIBONUCLEASE AND PAP PHOSPHATASE NRNA"/>
    <property type="match status" value="1"/>
</dbReference>
<dbReference type="Pfam" id="PF01368">
    <property type="entry name" value="DHH"/>
    <property type="match status" value="1"/>
</dbReference>
<dbReference type="Pfam" id="PF02272">
    <property type="entry name" value="DHHA1"/>
    <property type="match status" value="1"/>
</dbReference>
<dbReference type="SUPFAM" id="SSF64182">
    <property type="entry name" value="DHH phosphoesterases"/>
    <property type="match status" value="1"/>
</dbReference>
<proteinExistence type="inferred from homology"/>
<gene>
    <name type="primary">nrnA</name>
    <name type="ordered locus">MG190</name>
</gene>
<sequence>MKKGSITEAINAIKQFDKIVIFHHVRPDGDCLGAQQGLFHLIKANFKNKEVKCVGNNNNLFSFINMTFTNQIDESFLKEALAIVVDANYKNRIELRELLDKNLFKAVLRIDHHPNEDDLNTSFNFVEESYVACCEQIVEMATVAKWTIPPVAATLLYIGIYTDSNRFLYSNTSYRTLYLAAILYKAKADIRIVHDHLNHTSLADLKFKKYVYNHFKTQGQVIYFICTKKIQKRLRMTADQCARVNLLSNIADYKIWLFFIEQANNEIRIELRSNGINVRDIAIKYGGGGHNNASGAIITNKKQISDVVSDCVKKIVYN</sequence>
<reference key="1">
    <citation type="journal article" date="1995" name="Science">
        <title>The minimal gene complement of Mycoplasma genitalium.</title>
        <authorList>
            <person name="Fraser C.M."/>
            <person name="Gocayne J.D."/>
            <person name="White O."/>
            <person name="Adams M.D."/>
            <person name="Clayton R.A."/>
            <person name="Fleischmann R.D."/>
            <person name="Bult C.J."/>
            <person name="Kerlavage A.R."/>
            <person name="Sutton G.G."/>
            <person name="Kelley J.M."/>
            <person name="Fritchman J.L."/>
            <person name="Weidman J.F."/>
            <person name="Small K.V."/>
            <person name="Sandusky M."/>
            <person name="Fuhrmann J.L."/>
            <person name="Nguyen D.T."/>
            <person name="Utterback T.R."/>
            <person name="Saudek D.M."/>
            <person name="Phillips C.A."/>
            <person name="Merrick J.M."/>
            <person name="Tomb J.-F."/>
            <person name="Dougherty B.A."/>
            <person name="Bott K.F."/>
            <person name="Hu P.-C."/>
            <person name="Lucier T.S."/>
            <person name="Peterson S.N."/>
            <person name="Smith H.O."/>
            <person name="Hutchison C.A. III"/>
            <person name="Venter J.C."/>
        </authorList>
    </citation>
    <scope>NUCLEOTIDE SEQUENCE [LARGE SCALE GENOMIC DNA]</scope>
    <source>
        <strain>ATCC 33530 / DSM 19775 / NCTC 10195 / G37</strain>
    </source>
</reference>
<reference key="2">
    <citation type="journal article" date="1989" name="Gene">
        <title>Nucleotide sequence of the MgPa (mgp) operon of Mycoplasma genitalium and comparison to the P1 (mpp) operon of Mycoplasma pneumoniae.</title>
        <authorList>
            <person name="Inamine J.M."/>
            <person name="Loechel S."/>
            <person name="Collier A.M."/>
            <person name="Barile M.F."/>
            <person name="Hu P.-C."/>
        </authorList>
    </citation>
    <scope>NUCLEOTIDE SEQUENCE [GENOMIC DNA] OF 66-318</scope>
    <source>
        <strain>ATCC 33530 / DSM 19775 / NCTC 10195 / G37</strain>
    </source>
</reference>
<reference key="3">
    <citation type="journal article" date="2006" name="Proc. Natl. Acad. Sci. U.S.A.">
        <title>Essential genes of a minimal bacterium.</title>
        <authorList>
            <person name="Glass J.I."/>
            <person name="Assad-Garcia N."/>
            <person name="Alperovich N."/>
            <person name="Yooseph S."/>
            <person name="Lewis M.R."/>
            <person name="Maruf M."/>
            <person name="Hutchison C.A. III"/>
            <person name="Smith H.O."/>
            <person name="Venter J.C."/>
        </authorList>
    </citation>
    <scope>SEQUENCE REVISION TO 270</scope>
    <scope>DISRUPTION PHENOTYPE</scope>
    <source>
        <strain>ATCC 33530 / DSM 19775 / NCTC 10195 / G37</strain>
    </source>
</reference>
<comment type="function">
    <text evidence="1">Bifunctional enzyme which has both oligoribonuclease and pAp-phosphatase activities. Degrades RNA and DNA oligonucleotides with a length of 5 nucleotides and shorter, with a preference for longer oligomers. Converts 3'(2')-phosphoadenosine 5'-phosphate (PAP) to AMP (By similarity).</text>
</comment>
<comment type="catalytic activity">
    <reaction>
        <text>adenosine 3',5'-bisphosphate + H2O = AMP + phosphate</text>
        <dbReference type="Rhea" id="RHEA:10040"/>
        <dbReference type="ChEBI" id="CHEBI:15377"/>
        <dbReference type="ChEBI" id="CHEBI:43474"/>
        <dbReference type="ChEBI" id="CHEBI:58343"/>
        <dbReference type="ChEBI" id="CHEBI:456215"/>
        <dbReference type="EC" id="3.1.3.7"/>
    </reaction>
</comment>
<comment type="cofactor">
    <cofactor evidence="1">
        <name>a divalent metal cation</name>
        <dbReference type="ChEBI" id="CHEBI:60240"/>
    </cofactor>
</comment>
<comment type="disruption phenotype">
    <text evidence="2">Probably essential, it was not disrupted in a global transposon mutagenesis study.</text>
</comment>
<comment type="similarity">
    <text evidence="3">Belongs to the NrnA oligoribonuclease family.</text>
</comment>